<evidence type="ECO:0000255" key="1">
    <source>
        <dbReference type="HAMAP-Rule" id="MF_00023"/>
    </source>
</evidence>
<organism>
    <name type="scientific">Clostridium botulinum (strain Eklund 17B / Type B)</name>
    <dbReference type="NCBI Taxonomy" id="935198"/>
    <lineage>
        <taxon>Bacteria</taxon>
        <taxon>Bacillati</taxon>
        <taxon>Bacillota</taxon>
        <taxon>Clostridia</taxon>
        <taxon>Eubacteriales</taxon>
        <taxon>Clostridiaceae</taxon>
        <taxon>Clostridium</taxon>
    </lineage>
</organism>
<protein>
    <recommendedName>
        <fullName evidence="1">SsrA-binding protein</fullName>
    </recommendedName>
    <alternativeName>
        <fullName evidence="1">Small protein B</fullName>
    </alternativeName>
</protein>
<comment type="function">
    <text evidence="1">Required for rescue of stalled ribosomes mediated by trans-translation. Binds to transfer-messenger RNA (tmRNA), required for stable association of tmRNA with ribosomes. tmRNA and SmpB together mimic tRNA shape, replacing the anticodon stem-loop with SmpB. tmRNA is encoded by the ssrA gene; the 2 termini fold to resemble tRNA(Ala) and it encodes a 'tag peptide', a short internal open reading frame. During trans-translation Ala-aminoacylated tmRNA acts like a tRNA, entering the A-site of stalled ribosomes, displacing the stalled mRNA. The ribosome then switches to translate the ORF on the tmRNA; the nascent peptide is terminated with the 'tag peptide' encoded by the tmRNA and targeted for degradation. The ribosome is freed to recommence translation, which seems to be the essential function of trans-translation.</text>
</comment>
<comment type="subcellular location">
    <subcellularLocation>
        <location evidence="1">Cytoplasm</location>
    </subcellularLocation>
    <text evidence="1">The tmRNA-SmpB complex associates with stalled 70S ribosomes.</text>
</comment>
<comment type="similarity">
    <text evidence="1">Belongs to the SmpB family.</text>
</comment>
<sequence>MVRKKSSNTLAENRKARHEYFIEETIEAGIALVGTEVKSIRNGRANLKESYADIRNGEIFILSMHISPYEQGNIFNVEPLREKKLLLHKSEIHRLAGLVSRDGYTLIPLTLYLKAGKVKVALGICKGKKDYDKRDSMLEKAHNREMQRALKERSRY</sequence>
<dbReference type="EMBL" id="CP001056">
    <property type="protein sequence ID" value="ACD23401.1"/>
    <property type="molecule type" value="Genomic_DNA"/>
</dbReference>
<dbReference type="SMR" id="B2TPV9"/>
<dbReference type="KEGG" id="cbk:CLL_A3050"/>
<dbReference type="PATRIC" id="fig|935198.13.peg.3014"/>
<dbReference type="HOGENOM" id="CLU_108953_0_0_9"/>
<dbReference type="Proteomes" id="UP000001195">
    <property type="component" value="Chromosome"/>
</dbReference>
<dbReference type="GO" id="GO:0005829">
    <property type="term" value="C:cytosol"/>
    <property type="evidence" value="ECO:0007669"/>
    <property type="project" value="TreeGrafter"/>
</dbReference>
<dbReference type="GO" id="GO:0003723">
    <property type="term" value="F:RNA binding"/>
    <property type="evidence" value="ECO:0007669"/>
    <property type="project" value="UniProtKB-UniRule"/>
</dbReference>
<dbReference type="GO" id="GO:0070929">
    <property type="term" value="P:trans-translation"/>
    <property type="evidence" value="ECO:0007669"/>
    <property type="project" value="UniProtKB-UniRule"/>
</dbReference>
<dbReference type="CDD" id="cd09294">
    <property type="entry name" value="SmpB"/>
    <property type="match status" value="1"/>
</dbReference>
<dbReference type="Gene3D" id="2.40.280.10">
    <property type="match status" value="1"/>
</dbReference>
<dbReference type="HAMAP" id="MF_00023">
    <property type="entry name" value="SmpB"/>
    <property type="match status" value="1"/>
</dbReference>
<dbReference type="InterPro" id="IPR023620">
    <property type="entry name" value="SmpB"/>
</dbReference>
<dbReference type="InterPro" id="IPR000037">
    <property type="entry name" value="SsrA-bd_prot"/>
</dbReference>
<dbReference type="InterPro" id="IPR020081">
    <property type="entry name" value="SsrA-bd_prot_CS"/>
</dbReference>
<dbReference type="NCBIfam" id="NF003843">
    <property type="entry name" value="PRK05422.1"/>
    <property type="match status" value="1"/>
</dbReference>
<dbReference type="NCBIfam" id="TIGR00086">
    <property type="entry name" value="smpB"/>
    <property type="match status" value="1"/>
</dbReference>
<dbReference type="PANTHER" id="PTHR30308:SF2">
    <property type="entry name" value="SSRA-BINDING PROTEIN"/>
    <property type="match status" value="1"/>
</dbReference>
<dbReference type="PANTHER" id="PTHR30308">
    <property type="entry name" value="TMRNA-BINDING COMPONENT OF TRANS-TRANSLATION TAGGING COMPLEX"/>
    <property type="match status" value="1"/>
</dbReference>
<dbReference type="Pfam" id="PF01668">
    <property type="entry name" value="SmpB"/>
    <property type="match status" value="1"/>
</dbReference>
<dbReference type="SUPFAM" id="SSF74982">
    <property type="entry name" value="Small protein B (SmpB)"/>
    <property type="match status" value="1"/>
</dbReference>
<dbReference type="PROSITE" id="PS01317">
    <property type="entry name" value="SSRP"/>
    <property type="match status" value="1"/>
</dbReference>
<proteinExistence type="inferred from homology"/>
<gene>
    <name evidence="1" type="primary">smpB</name>
    <name type="ordered locus">CLL_A3050</name>
</gene>
<name>SSRP_CLOBB</name>
<accession>B2TPV9</accession>
<reference key="1">
    <citation type="submission" date="2008-04" db="EMBL/GenBank/DDBJ databases">
        <title>Complete sequence of Clostridium botulinum strain Eklund.</title>
        <authorList>
            <person name="Brinkac L.M."/>
            <person name="Brown J.L."/>
            <person name="Bruce D."/>
            <person name="Detter C."/>
            <person name="Munk C."/>
            <person name="Smith L.A."/>
            <person name="Smith T.J."/>
            <person name="Sutton G."/>
            <person name="Brettin T.S."/>
        </authorList>
    </citation>
    <scope>NUCLEOTIDE SEQUENCE [LARGE SCALE GENOMIC DNA]</scope>
    <source>
        <strain>Eklund 17B / Type B</strain>
    </source>
</reference>
<feature type="chain" id="PRO_1000090140" description="SsrA-binding protein">
    <location>
        <begin position="1"/>
        <end position="156"/>
    </location>
</feature>
<keyword id="KW-0963">Cytoplasm</keyword>
<keyword id="KW-0694">RNA-binding</keyword>